<name>TERT_CANLF</name>
<proteinExistence type="evidence at transcript level"/>
<comment type="function">
    <text evidence="1 7">Telomerase is a ribonucleoprotein enzyme essential for the replication of chromosome termini in most eukaryotes. Active in progenitor and cancer cells. Inactive, or very low activity, in normal somatic cells. Catalytic component of the teleromerase holoenzyme complex whose main activity is the elongation of telomeres by acting as a reverse transcriptase that adds simple sequence repeats to chromosome ends by copying a template sequence within the RNA component of the enzyme. Catalyzes the RNA-dependent extension of 3'-chromosomal termini with the 6-nucleotide telomeric repeat unit, 5'-TTAGGG-3'. The catalytic cycle involves primer binding, primer extension and release of product once the template boundary has been reached or nascent product translocation followed by further extension. More active on substrates containing 2 or 3 telomeric repeats. Telomerase activity is regulated by a number of factors including telomerase complex-associated proteins, chaperones and polypeptide modifiers. Modulates Wnt signaling. Plays important roles in aging and antiapoptosis (By similarity).</text>
</comment>
<comment type="catalytic activity">
    <reaction evidence="5">
        <text>DNA(n) + a 2'-deoxyribonucleoside 5'-triphosphate = DNA(n+1) + diphosphate</text>
        <dbReference type="Rhea" id="RHEA:22508"/>
        <dbReference type="Rhea" id="RHEA-COMP:17339"/>
        <dbReference type="Rhea" id="RHEA-COMP:17340"/>
        <dbReference type="ChEBI" id="CHEBI:33019"/>
        <dbReference type="ChEBI" id="CHEBI:61560"/>
        <dbReference type="ChEBI" id="CHEBI:173112"/>
        <dbReference type="EC" id="2.7.7.49"/>
    </reaction>
</comment>
<comment type="subunit">
    <text evidence="2 3">Catalytic component of the telomerase holoenzyme complex composed of one molecule of TERT, one molecule of WRAP53/TCAB1, two molecules of H/ACA ribonucleoprotein complex subunits DKC1, NOP10, NHP2 and GAR1, and a telomerase RNA template component (TERC). The telomerase holoenzyme complex is associated with TEP1, SMG6/EST1A and POT1. The molecular chaperone HSP90/P23 complex is required for correct assembly and stabilization of the active telomerase. Interacts directly with HSP90A and PTGES3. Interacts with HSPA1A; the interaction occurs in the absence of TERC and dissociates once the complex has formed. Interacts with RAN; the interaction promotes nuclear export of TERT. Interacts with XPO1. Interacts with PTPN11; the interaction retains TERT in the nucleus. Interacts with NCL (via RRM1 and C-terminal RRM4/Arg/Gly-rich domains); the interaction is important for nucleolar localization of TERT (By similarity). Interacts with SMARCA4 (via the bromodomain); the interaction regulates Wnt-mediated signaling (By similarity). Interacts with MCRS1 (isoform MCRS2); the interaction inhibits in vitro telomerase activity (By similarity). Interacts with PIF1; the interaction has no effect on the elongation activity of TERT (By similarity). Interacts with PML; the interaction recruits TERT to PML bodies and inhibits telomerase activity (By similarity). Interacts with GNL3L (By similarity). Interacts with isoform 1 and isoform 2 of NVL (By similarity). Interacts with DHX36 (By similarity). Interacts with ATF7 (By similarity).</text>
</comment>
<comment type="subcellular location">
    <subcellularLocation>
        <location evidence="2">Nucleus</location>
        <location evidence="2">Nucleolus</location>
    </subcellularLocation>
    <subcellularLocation>
        <location evidence="1">Nucleus</location>
        <location evidence="1">Nucleoplasm</location>
    </subcellularLocation>
    <subcellularLocation>
        <location>Nucleus</location>
    </subcellularLocation>
    <subcellularLocation>
        <location>Chromosome</location>
        <location>Telomere</location>
    </subcellularLocation>
    <subcellularLocation>
        <location evidence="1">Cytoplasm</location>
    </subcellularLocation>
    <subcellularLocation>
        <location evidence="1">Nucleus</location>
        <location evidence="1">PML body</location>
    </subcellularLocation>
    <text evidence="1">Shuttling between nuclear and cytoplasm depends on cell cycle, phosphorylation states, transformation and DNA damage. Diffuse localization in the nucleoplasm. Enriched in nucleoli of certain cell types. Translocated to the cytoplasm via nuclear pores in a CRM1/RAN-dependent manner involving oxidative stress-mediated phosphorylation at Tyr-697. Dephosphorylation at this site by SHP2 retains TERT in the nucleus. Translocated to the nucleus by phosphorylation by AKT (By similarity).</text>
</comment>
<comment type="domain">
    <text evidence="1">The primer grip sequence in the RT domain is required for telomerase activity and for stable association with short telomeric primers.</text>
</comment>
<comment type="domain">
    <text evidence="1">The RNA-interacting domain 1 (RD1)/N-terminal extension (NTE) is required for interaction with the pseudoknot-template domain of each of TERC dimers. It contains anchor sites that bind primer nucleotides upstream of the RNA-DNA hybrid and is thus an essential determinant of repeat addition processivity (By similarity).</text>
</comment>
<comment type="domain">
    <text evidence="1">The RNA-interacting domain 2 (RD2) is essential for both interaction with the CR4-CR5 domain of TERC and for DNA synthesis.</text>
</comment>
<comment type="PTM">
    <text evidence="1">Phosphorylation at Tyr-697 under oxidative stress leads to translocation of TERT to the cytoplasm and reduces its antiapoptotic activity. Dephosphorylated by SHP2/PTPN11 leading to nuclear retention. Phosphorylation at Ser-227 by the AKT pathway promotes nuclear location. Phosphorylation at the G2/M phase at Ser-446 by DYRK2 promotes ubiquitination by the EDVP complex and degradation (By similarity).</text>
</comment>
<comment type="PTM">
    <text evidence="1">Ubiquitinated by the EDVP complex, a E3 ligase complex following phosphorylation at Ser-446 by DYRK2. Ubiquitinated leads to proteasomal degradation (By similarity).</text>
</comment>
<comment type="similarity">
    <text evidence="8">Belongs to the reverse transcriptase family. Telomerase subfamily.</text>
</comment>
<evidence type="ECO:0000250" key="1"/>
<evidence type="ECO:0000250" key="2">
    <source>
        <dbReference type="UniProtKB" id="O14746"/>
    </source>
</evidence>
<evidence type="ECO:0000250" key="3">
    <source>
        <dbReference type="UniProtKB" id="O70372"/>
    </source>
</evidence>
<evidence type="ECO:0000250" key="4">
    <source>
        <dbReference type="UniProtKB" id="Q4KTA7"/>
    </source>
</evidence>
<evidence type="ECO:0000255" key="5">
    <source>
        <dbReference type="PROSITE-ProRule" id="PRU00405"/>
    </source>
</evidence>
<evidence type="ECO:0000256" key="6">
    <source>
        <dbReference type="SAM" id="MobiDB-lite"/>
    </source>
</evidence>
<evidence type="ECO:0000269" key="7">
    <source>
    </source>
</evidence>
<evidence type="ECO:0000305" key="8"/>
<keyword id="KW-0158">Chromosome</keyword>
<keyword id="KW-0963">Cytoplasm</keyword>
<keyword id="KW-0238">DNA-binding</keyword>
<keyword id="KW-0460">Magnesium</keyword>
<keyword id="KW-0479">Metal-binding</keyword>
<keyword id="KW-0548">Nucleotidyltransferase</keyword>
<keyword id="KW-0539">Nucleus</keyword>
<keyword id="KW-0597">Phosphoprotein</keyword>
<keyword id="KW-1185">Reference proteome</keyword>
<keyword id="KW-0687">Ribonucleoprotein</keyword>
<keyword id="KW-0695">RNA-directed DNA polymerase</keyword>
<keyword id="KW-0779">Telomere</keyword>
<keyword id="KW-0808">Transferase</keyword>
<keyword id="KW-0832">Ubl conjugation</keyword>
<reference key="1">
    <citation type="journal article" date="2004" name="Gene">
        <title>Isolation and expression of the reverse transcriptase component of the Canis familiaris telomerase ribonucleoprotein (dogTERT).</title>
        <authorList>
            <person name="Nasir L."/>
            <person name="Gault E."/>
            <person name="Campbell S."/>
            <person name="Veeramalai M."/>
            <person name="Gilbert D."/>
            <person name="McFarlane R."/>
            <person name="Munro A."/>
            <person name="Argyle D.J."/>
        </authorList>
    </citation>
    <scope>NUCLEOTIDE SEQUENCE [MRNA]</scope>
    <scope>TISSUE SPECIFICITY</scope>
    <scope>FUNCTION</scope>
    <source>
        <tissue>Kidney</tissue>
    </source>
</reference>
<protein>
    <recommendedName>
        <fullName>Telomerase reverse transcriptase</fullName>
        <ecNumber>2.7.7.49</ecNumber>
    </recommendedName>
    <alternativeName>
        <fullName>Telomerase catalytic subunit</fullName>
    </alternativeName>
</protein>
<accession>Q6A548</accession>
<feature type="chain" id="PRO_0000054924" description="Telomerase reverse transcriptase">
    <location>
        <begin position="1"/>
        <end position="1123"/>
    </location>
</feature>
<feature type="domain" description="Reverse transcriptase" evidence="5">
    <location>
        <begin position="595"/>
        <end position="926"/>
    </location>
</feature>
<feature type="region of interest" description="RNA-interacting domain 1" evidence="1">
    <location>
        <begin position="1"/>
        <end position="230"/>
    </location>
</feature>
<feature type="region of interest" description="GQ motif" evidence="1">
    <location>
        <begin position="58"/>
        <end position="197"/>
    </location>
</feature>
<feature type="region of interest" description="Required for regulating specificity for telomeric DNA and for processivity for primer elongation" evidence="1">
    <location>
        <begin position="137"/>
        <end position="141"/>
    </location>
</feature>
<feature type="region of interest" description="Disordered" evidence="6">
    <location>
        <begin position="202"/>
        <end position="311"/>
    </location>
</feature>
<feature type="region of interest" description="Linker" evidence="1">
    <location>
        <begin position="231"/>
        <end position="308"/>
    </location>
</feature>
<feature type="region of interest" description="RNA-interacting domain 2" evidence="1">
    <location>
        <begin position="309"/>
        <end position="539"/>
    </location>
</feature>
<feature type="region of interest" description="QFP motif" evidence="1">
    <location>
        <begin position="360"/>
        <end position="510"/>
    </location>
</feature>
<feature type="region of interest" description="CP motif" evidence="1">
    <location>
        <begin position="381"/>
        <end position="401"/>
    </location>
</feature>
<feature type="region of interest" description="Required for oligomerization" evidence="1">
    <location>
        <begin position="905"/>
        <end position="919"/>
    </location>
</feature>
<feature type="region of interest" description="Primer grip sequence" evidence="1">
    <location>
        <begin position="921"/>
        <end position="925"/>
    </location>
</feature>
<feature type="region of interest" description="CTE" evidence="1">
    <location>
        <begin position="927"/>
        <end position="1123"/>
    </location>
</feature>
<feature type="short sequence motif" description="Bipartite nuclear localization signal" evidence="1">
    <location>
        <begin position="222"/>
        <end position="240"/>
    </location>
</feature>
<feature type="short sequence motif" description="TFLY; involved in RNA binding" evidence="4">
    <location>
        <begin position="312"/>
        <end position="317"/>
    </location>
</feature>
<feature type="compositionally biased region" description="Low complexity" evidence="6">
    <location>
        <begin position="260"/>
        <end position="279"/>
    </location>
</feature>
<feature type="binding site" evidence="5">
    <location>
        <position position="702"/>
    </location>
    <ligand>
        <name>Mg(2+)</name>
        <dbReference type="ChEBI" id="CHEBI:18420"/>
        <note>catalytic</note>
    </ligand>
</feature>
<feature type="binding site" evidence="5">
    <location>
        <position position="859"/>
    </location>
    <ligand>
        <name>Mg(2+)</name>
        <dbReference type="ChEBI" id="CHEBI:18420"/>
        <note>catalytic</note>
    </ligand>
</feature>
<feature type="binding site" evidence="5">
    <location>
        <position position="860"/>
    </location>
    <ligand>
        <name>Mg(2+)</name>
        <dbReference type="ChEBI" id="CHEBI:18420"/>
        <note>catalytic</note>
    </ligand>
</feature>
<feature type="site" description="Required for optimal binding of telomeric ssDNA and incorporation of nucleotides at the second position of the template" evidence="1">
    <location>
        <position position="169"/>
    </location>
</feature>
<feature type="site" description="Required for nucleotide incorporation and primer extension rate" evidence="1">
    <location>
        <position position="858"/>
    </location>
</feature>
<feature type="modified residue" description="Phosphoserine; by PKB/AKT1" evidence="2">
    <location>
        <position position="227"/>
    </location>
</feature>
<feature type="modified residue" description="Phosphoserine; by DYRK2" evidence="2">
    <location>
        <position position="446"/>
    </location>
</feature>
<feature type="modified residue" description="Phosphotyrosine; by SRC-type Tyr-kinases" evidence="2">
    <location>
        <position position="697"/>
    </location>
</feature>
<dbReference type="EC" id="2.7.7.49"/>
<dbReference type="EMBL" id="AF380351">
    <property type="protein sequence ID" value="AAQ02791.1"/>
    <property type="molecule type" value="mRNA"/>
</dbReference>
<dbReference type="RefSeq" id="NP_001026800.1">
    <property type="nucleotide sequence ID" value="NM_001031630.1"/>
</dbReference>
<dbReference type="SMR" id="Q6A548"/>
<dbReference type="FunCoup" id="Q6A548">
    <property type="interactions" value="23"/>
</dbReference>
<dbReference type="STRING" id="9615.ENSCAFP00000048407"/>
<dbReference type="PaxDb" id="9612-ENSCAFP00000015805"/>
<dbReference type="GeneID" id="403412"/>
<dbReference type="KEGG" id="cfa:403412"/>
<dbReference type="CTD" id="7015"/>
<dbReference type="eggNOG" id="KOG1005">
    <property type="taxonomic scope" value="Eukaryota"/>
</dbReference>
<dbReference type="InParanoid" id="Q6A548"/>
<dbReference type="OrthoDB" id="289721at2759"/>
<dbReference type="BRENDA" id="2.7.7.49">
    <property type="organism ID" value="1153"/>
</dbReference>
<dbReference type="Proteomes" id="UP000002254">
    <property type="component" value="Unplaced"/>
</dbReference>
<dbReference type="Proteomes" id="UP000694429">
    <property type="component" value="Unplaced"/>
</dbReference>
<dbReference type="Proteomes" id="UP000694542">
    <property type="component" value="Unplaced"/>
</dbReference>
<dbReference type="Proteomes" id="UP000805418">
    <property type="component" value="Unplaced"/>
</dbReference>
<dbReference type="GO" id="GO:0000781">
    <property type="term" value="C:chromosome, telomeric region"/>
    <property type="evidence" value="ECO:0007669"/>
    <property type="project" value="UniProtKB-SubCell"/>
</dbReference>
<dbReference type="GO" id="GO:0005737">
    <property type="term" value="C:cytoplasm"/>
    <property type="evidence" value="ECO:0007669"/>
    <property type="project" value="UniProtKB-SubCell"/>
</dbReference>
<dbReference type="GO" id="GO:0005730">
    <property type="term" value="C:nucleolus"/>
    <property type="evidence" value="ECO:0000250"/>
    <property type="project" value="UniProtKB"/>
</dbReference>
<dbReference type="GO" id="GO:0016605">
    <property type="term" value="C:PML body"/>
    <property type="evidence" value="ECO:0007669"/>
    <property type="project" value="UniProtKB-SubCell"/>
</dbReference>
<dbReference type="GO" id="GO:0000333">
    <property type="term" value="C:telomerase catalytic core complex"/>
    <property type="evidence" value="ECO:0000318"/>
    <property type="project" value="GO_Central"/>
</dbReference>
<dbReference type="GO" id="GO:0005697">
    <property type="term" value="C:telomerase holoenzyme complex"/>
    <property type="evidence" value="ECO:0000250"/>
    <property type="project" value="UniProtKB"/>
</dbReference>
<dbReference type="GO" id="GO:0046872">
    <property type="term" value="F:metal ion binding"/>
    <property type="evidence" value="ECO:0007669"/>
    <property type="project" value="UniProtKB-KW"/>
</dbReference>
<dbReference type="GO" id="GO:0003720">
    <property type="term" value="F:telomerase activity"/>
    <property type="evidence" value="ECO:0000250"/>
    <property type="project" value="UniProtKB"/>
</dbReference>
<dbReference type="GO" id="GO:0070034">
    <property type="term" value="F:telomerase RNA binding"/>
    <property type="evidence" value="ECO:0000318"/>
    <property type="project" value="GO_Central"/>
</dbReference>
<dbReference type="GO" id="GO:0042162">
    <property type="term" value="F:telomeric DNA binding"/>
    <property type="evidence" value="ECO:0000318"/>
    <property type="project" value="GO_Central"/>
</dbReference>
<dbReference type="GO" id="GO:0007004">
    <property type="term" value="P:telomere maintenance via telomerase"/>
    <property type="evidence" value="ECO:0000250"/>
    <property type="project" value="UniProtKB"/>
</dbReference>
<dbReference type="CDD" id="cd01648">
    <property type="entry name" value="TERT"/>
    <property type="match status" value="1"/>
</dbReference>
<dbReference type="FunFam" id="1.10.132.70:FF:000001">
    <property type="entry name" value="Telomerase reverse transcriptase"/>
    <property type="match status" value="1"/>
</dbReference>
<dbReference type="FunFam" id="1.10.357.90:FF:000001">
    <property type="entry name" value="Telomerase reverse transcriptase"/>
    <property type="match status" value="1"/>
</dbReference>
<dbReference type="FunFam" id="3.30.70.2630:FF:000001">
    <property type="entry name" value="Telomerase reverse transcriptase"/>
    <property type="match status" value="1"/>
</dbReference>
<dbReference type="Gene3D" id="1.10.132.70">
    <property type="match status" value="1"/>
</dbReference>
<dbReference type="Gene3D" id="1.10.357.90">
    <property type="match status" value="1"/>
</dbReference>
<dbReference type="Gene3D" id="3.30.70.2630">
    <property type="match status" value="1"/>
</dbReference>
<dbReference type="InterPro" id="IPR043502">
    <property type="entry name" value="DNA/RNA_pol_sf"/>
</dbReference>
<dbReference type="InterPro" id="IPR000477">
    <property type="entry name" value="RT_dom"/>
</dbReference>
<dbReference type="InterPro" id="IPR021891">
    <property type="entry name" value="Telomerase_RBD"/>
</dbReference>
<dbReference type="InterPro" id="IPR003545">
    <property type="entry name" value="Telomerase_RT"/>
</dbReference>
<dbReference type="InterPro" id="IPR049139">
    <property type="entry name" value="TERT_C"/>
</dbReference>
<dbReference type="PANTHER" id="PTHR12066">
    <property type="entry name" value="TELOMERASE REVERSE TRANSCRIPTASE"/>
    <property type="match status" value="1"/>
</dbReference>
<dbReference type="PANTHER" id="PTHR12066:SF0">
    <property type="entry name" value="TELOMERASE REVERSE TRANSCRIPTASE"/>
    <property type="match status" value="1"/>
</dbReference>
<dbReference type="Pfam" id="PF00078">
    <property type="entry name" value="RVT_1"/>
    <property type="match status" value="1"/>
</dbReference>
<dbReference type="Pfam" id="PF12009">
    <property type="entry name" value="Telomerase_RBD"/>
    <property type="match status" value="1"/>
</dbReference>
<dbReference type="Pfam" id="PF21399">
    <property type="entry name" value="TERT_C"/>
    <property type="match status" value="1"/>
</dbReference>
<dbReference type="PRINTS" id="PR01365">
    <property type="entry name" value="TELOMERASERT"/>
</dbReference>
<dbReference type="SMART" id="SM00975">
    <property type="entry name" value="Telomerase_RBD"/>
    <property type="match status" value="1"/>
</dbReference>
<dbReference type="SUPFAM" id="SSF56672">
    <property type="entry name" value="DNA/RNA polymerases"/>
    <property type="match status" value="1"/>
</dbReference>
<dbReference type="PROSITE" id="PS50878">
    <property type="entry name" value="RT_POL"/>
    <property type="match status" value="1"/>
</dbReference>
<gene>
    <name type="primary">TERT</name>
</gene>
<organism>
    <name type="scientific">Canis lupus familiaris</name>
    <name type="common">Dog</name>
    <name type="synonym">Canis familiaris</name>
    <dbReference type="NCBI Taxonomy" id="9615"/>
    <lineage>
        <taxon>Eukaryota</taxon>
        <taxon>Metazoa</taxon>
        <taxon>Chordata</taxon>
        <taxon>Craniata</taxon>
        <taxon>Vertebrata</taxon>
        <taxon>Euteleostomi</taxon>
        <taxon>Mammalia</taxon>
        <taxon>Eutheria</taxon>
        <taxon>Laurasiatheria</taxon>
        <taxon>Carnivora</taxon>
        <taxon>Caniformia</taxon>
        <taxon>Canidae</taxon>
        <taxon>Canis</taxon>
    </lineage>
</organism>
<sequence length="1123" mass="124825">MPRAPRCRAVRALLRGRYREVLPLATFLRRLGPPGRLLVRRGDPAAFRALVAQCLVCVPWGARPPPAAPCFRQVSCLKELVARVVQRLCERGARNVLAFGFALLDGARGGPPVAFTTSVRSYLPNTVTETLRGSGAWGLLLRRVGDDVLTHLLARCALYLLVAPSCAYQVCGPPLYDLCAPASLPLPAPGLPGLPGLPGLGAGAGASADLRPTRQAQNSGARRRRGSPGSGVPLAKRPRRSVASEPERGAHRSFPRAQQPPVSEAPAVTPAVAASPAASWEGGPPGTRPTTPAWHPYPGPQGVPHDPAHPETKRFLYCSGGRERLRPSFLLSALPPTLSGARKLVETIFLGSAPQKPGAARRMRRLPARYWRMRPLFQELLGNHARCPYRALLRTHCPLRAMAAKEGSGNQAHRGVGICPLERPVAAPQEQTDSTRLVQLLRQHSSPWQVYAFLRACLCWLVPTGLWGSRHNQRRFLRNVKKFISLGKHAKLSLQELTWKMKVRDCTWLHGNPGACCVPAAEHRRREEILARFLVLVDGHIYVVKLLRSFFYVTETTFQKNRLFFYRKSVWSQLQSIGIRQLFNSVHLRELSEAEVRRHREARPALLTSRLRFLPKPSGLRPIVNMDYIMGARTFHRDKKVQHLTSQLKTLFSVLNYERARRPSLLGASMLGMDDIHRAWRTFVLRIRAQNPAPQLYFVKVDVTGAYDALPQDRLVEVIANVIRPQESTYCVRHYAVVQRTARGHVRKAFKRHVSTFADLQPYMRQFVERLQETSLLRDAVVIEQSSSLNEAGSSLFHLFLRLVHNHVVRIGGKSYIQCQGVPQGSILSTLLCSLCYGDMERRLFPGIEQDGVLLRLVDDFLLVTPHLTQAQAFLRTLVKGVPEYGCRANLQKTAVNFPVEDGALGSAAPLQLPAHCLFPWCGLLLDTRTLEVSCDYSSYAHTSIRASLTFSQGAKPGRNMRRKLLAVLRLKCCALFLDLQVNGIHTVYMNVYKIFLLQAYRFHACVLQLPFNQPVRKNPSFFLRVIADTASCCYSLLKARNAGLSLGAKGASGLFPSEAARWLCLHAFLLKLAHHSGTYRCLLGALQAAKAHLSRQLPRGTLAALEAAADPSLTADFKTILD</sequence>